<name>Y4274_SERP5</name>
<gene>
    <name type="ordered locus">Spro_4274</name>
</gene>
<sequence length="220" mass="23292">MKRTKNINRETFRKSWRDYRVAPVALAISAVFMLAGCEKSDETVSMYQNADDCSRTNPSMSEQCTTAYNNALKEAEKTAPKYATREDCVAEFGEAQCTQAPAPAQAGMAAESQSSGSMWMPLMAGYMMGRMMGGSGFAQQPLFTSKNAASPANGKFVDASGKSYGPATAGGRTMTVPKTAMAPKPAVTNTVTRGGFGESVAKQTSMQRSSATSSSRSMGG</sequence>
<organism>
    <name type="scientific">Serratia proteamaculans (strain 568)</name>
    <dbReference type="NCBI Taxonomy" id="399741"/>
    <lineage>
        <taxon>Bacteria</taxon>
        <taxon>Pseudomonadati</taxon>
        <taxon>Pseudomonadota</taxon>
        <taxon>Gammaproteobacteria</taxon>
        <taxon>Enterobacterales</taxon>
        <taxon>Yersiniaceae</taxon>
        <taxon>Serratia</taxon>
    </lineage>
</organism>
<protein>
    <recommendedName>
        <fullName evidence="1">UPF0441 protein Spro_4274</fullName>
    </recommendedName>
</protein>
<comment type="similarity">
    <text evidence="1">Belongs to the UPF0441 family.</text>
</comment>
<proteinExistence type="inferred from homology"/>
<dbReference type="EMBL" id="CP000826">
    <property type="protein sequence ID" value="ABV43368.1"/>
    <property type="molecule type" value="Genomic_DNA"/>
</dbReference>
<dbReference type="STRING" id="399741.Spro_4274"/>
<dbReference type="KEGG" id="spe:Spro_4274"/>
<dbReference type="eggNOG" id="COG5463">
    <property type="taxonomic scope" value="Bacteria"/>
</dbReference>
<dbReference type="HOGENOM" id="CLU_095624_0_0_6"/>
<dbReference type="OrthoDB" id="5903948at2"/>
<dbReference type="HAMAP" id="MF_01188">
    <property type="entry name" value="UPF0441"/>
    <property type="match status" value="1"/>
</dbReference>
<dbReference type="InterPro" id="IPR009576">
    <property type="entry name" value="Biofilm_formation_YgiB"/>
</dbReference>
<dbReference type="NCBIfam" id="NF008655">
    <property type="entry name" value="PRK11653.1"/>
    <property type="match status" value="1"/>
</dbReference>
<dbReference type="Pfam" id="PF06693">
    <property type="entry name" value="DUF1190"/>
    <property type="match status" value="1"/>
</dbReference>
<accession>A8GJS8</accession>
<reference key="1">
    <citation type="submission" date="2007-09" db="EMBL/GenBank/DDBJ databases">
        <title>Complete sequence of chromosome of Serratia proteamaculans 568.</title>
        <authorList>
            <consortium name="US DOE Joint Genome Institute"/>
            <person name="Copeland A."/>
            <person name="Lucas S."/>
            <person name="Lapidus A."/>
            <person name="Barry K."/>
            <person name="Glavina del Rio T."/>
            <person name="Dalin E."/>
            <person name="Tice H."/>
            <person name="Pitluck S."/>
            <person name="Chain P."/>
            <person name="Malfatti S."/>
            <person name="Shin M."/>
            <person name="Vergez L."/>
            <person name="Schmutz J."/>
            <person name="Larimer F."/>
            <person name="Land M."/>
            <person name="Hauser L."/>
            <person name="Kyrpides N."/>
            <person name="Kim E."/>
            <person name="Taghavi S."/>
            <person name="Newman L."/>
            <person name="Vangronsveld J."/>
            <person name="van der Lelie D."/>
            <person name="Richardson P."/>
        </authorList>
    </citation>
    <scope>NUCLEOTIDE SEQUENCE [LARGE SCALE GENOMIC DNA]</scope>
    <source>
        <strain>568</strain>
    </source>
</reference>
<feature type="chain" id="PRO_1000065866" description="UPF0441 protein Spro_4274">
    <location>
        <begin position="1"/>
        <end position="220"/>
    </location>
</feature>
<feature type="region of interest" description="Disordered" evidence="2">
    <location>
        <begin position="181"/>
        <end position="220"/>
    </location>
</feature>
<feature type="compositionally biased region" description="Low complexity" evidence="2">
    <location>
        <begin position="203"/>
        <end position="220"/>
    </location>
</feature>
<evidence type="ECO:0000255" key="1">
    <source>
        <dbReference type="HAMAP-Rule" id="MF_01188"/>
    </source>
</evidence>
<evidence type="ECO:0000256" key="2">
    <source>
        <dbReference type="SAM" id="MobiDB-lite"/>
    </source>
</evidence>